<reference key="1">
    <citation type="journal article" date="2003" name="Nature">
        <title>Genome divergence in two Prochlorococcus ecotypes reflects oceanic niche differentiation.</title>
        <authorList>
            <person name="Rocap G."/>
            <person name="Larimer F.W."/>
            <person name="Lamerdin J.E."/>
            <person name="Malfatti S."/>
            <person name="Chain P."/>
            <person name="Ahlgren N.A."/>
            <person name="Arellano A."/>
            <person name="Coleman M."/>
            <person name="Hauser L."/>
            <person name="Hess W.R."/>
            <person name="Johnson Z.I."/>
            <person name="Land M.L."/>
            <person name="Lindell D."/>
            <person name="Post A.F."/>
            <person name="Regala W."/>
            <person name="Shah M."/>
            <person name="Shaw S.L."/>
            <person name="Steglich C."/>
            <person name="Sullivan M.B."/>
            <person name="Ting C.S."/>
            <person name="Tolonen A."/>
            <person name="Webb E.A."/>
            <person name="Zinser E.R."/>
            <person name="Chisholm S.W."/>
        </authorList>
    </citation>
    <scope>NUCLEOTIDE SEQUENCE [LARGE SCALE GENOMIC DNA]</scope>
    <source>
        <strain>CCMP1986 / NIES-2087 / MED4</strain>
    </source>
</reference>
<proteinExistence type="inferred from homology"/>
<feature type="chain" id="PRO_0000323926" description="Uridylate kinase">
    <location>
        <begin position="1"/>
        <end position="234"/>
    </location>
</feature>
<feature type="binding site" evidence="1">
    <location>
        <begin position="9"/>
        <end position="12"/>
    </location>
    <ligand>
        <name>ATP</name>
        <dbReference type="ChEBI" id="CHEBI:30616"/>
    </ligand>
</feature>
<feature type="binding site" evidence="1">
    <location>
        <position position="51"/>
    </location>
    <ligand>
        <name>UMP</name>
        <dbReference type="ChEBI" id="CHEBI:57865"/>
    </ligand>
</feature>
<feature type="binding site" evidence="1">
    <location>
        <position position="52"/>
    </location>
    <ligand>
        <name>ATP</name>
        <dbReference type="ChEBI" id="CHEBI:30616"/>
    </ligand>
</feature>
<feature type="binding site" evidence="1">
    <location>
        <position position="56"/>
    </location>
    <ligand>
        <name>ATP</name>
        <dbReference type="ChEBI" id="CHEBI:30616"/>
    </ligand>
</feature>
<feature type="binding site" evidence="1">
    <location>
        <position position="71"/>
    </location>
    <ligand>
        <name>UMP</name>
        <dbReference type="ChEBI" id="CHEBI:57865"/>
    </ligand>
</feature>
<feature type="binding site" evidence="1">
    <location>
        <begin position="132"/>
        <end position="139"/>
    </location>
    <ligand>
        <name>UMP</name>
        <dbReference type="ChEBI" id="CHEBI:57865"/>
    </ligand>
</feature>
<feature type="binding site" evidence="1">
    <location>
        <position position="159"/>
    </location>
    <ligand>
        <name>ATP</name>
        <dbReference type="ChEBI" id="CHEBI:30616"/>
    </ligand>
</feature>
<feature type="binding site" evidence="1">
    <location>
        <position position="165"/>
    </location>
    <ligand>
        <name>ATP</name>
        <dbReference type="ChEBI" id="CHEBI:30616"/>
    </ligand>
</feature>
<feature type="binding site" evidence="1">
    <location>
        <position position="168"/>
    </location>
    <ligand>
        <name>ATP</name>
        <dbReference type="ChEBI" id="CHEBI:30616"/>
    </ligand>
</feature>
<name>PYRH_PROMP</name>
<comment type="function">
    <text evidence="1">Catalyzes the reversible phosphorylation of UMP to UDP.</text>
</comment>
<comment type="catalytic activity">
    <reaction evidence="1">
        <text>UMP + ATP = UDP + ADP</text>
        <dbReference type="Rhea" id="RHEA:24400"/>
        <dbReference type="ChEBI" id="CHEBI:30616"/>
        <dbReference type="ChEBI" id="CHEBI:57865"/>
        <dbReference type="ChEBI" id="CHEBI:58223"/>
        <dbReference type="ChEBI" id="CHEBI:456216"/>
        <dbReference type="EC" id="2.7.4.22"/>
    </reaction>
</comment>
<comment type="activity regulation">
    <text evidence="1">Inhibited by UTP.</text>
</comment>
<comment type="pathway">
    <text evidence="1">Pyrimidine metabolism; CTP biosynthesis via de novo pathway; UDP from UMP (UMPK route): step 1/1.</text>
</comment>
<comment type="subunit">
    <text evidence="1">Homohexamer.</text>
</comment>
<comment type="subcellular location">
    <subcellularLocation>
        <location evidence="1">Cytoplasm</location>
    </subcellularLocation>
</comment>
<comment type="similarity">
    <text evidence="1">Belongs to the UMP kinase family.</text>
</comment>
<dbReference type="EC" id="2.7.4.22" evidence="1"/>
<dbReference type="EMBL" id="BX548174">
    <property type="protein sequence ID" value="CAE18981.1"/>
    <property type="molecule type" value="Genomic_DNA"/>
</dbReference>
<dbReference type="RefSeq" id="WP_011132157.1">
    <property type="nucleotide sequence ID" value="NC_005072.1"/>
</dbReference>
<dbReference type="SMR" id="Q7V2F8"/>
<dbReference type="STRING" id="59919.PMM0522"/>
<dbReference type="KEGG" id="pmm:PMM0522"/>
<dbReference type="eggNOG" id="COG0528">
    <property type="taxonomic scope" value="Bacteria"/>
</dbReference>
<dbReference type="HOGENOM" id="CLU_033861_0_0_3"/>
<dbReference type="OrthoDB" id="9807458at2"/>
<dbReference type="UniPathway" id="UPA00159">
    <property type="reaction ID" value="UER00275"/>
</dbReference>
<dbReference type="Proteomes" id="UP000001026">
    <property type="component" value="Chromosome"/>
</dbReference>
<dbReference type="GO" id="GO:0005737">
    <property type="term" value="C:cytoplasm"/>
    <property type="evidence" value="ECO:0007669"/>
    <property type="project" value="UniProtKB-SubCell"/>
</dbReference>
<dbReference type="GO" id="GO:0005524">
    <property type="term" value="F:ATP binding"/>
    <property type="evidence" value="ECO:0007669"/>
    <property type="project" value="UniProtKB-KW"/>
</dbReference>
<dbReference type="GO" id="GO:0033862">
    <property type="term" value="F:UMP kinase activity"/>
    <property type="evidence" value="ECO:0007669"/>
    <property type="project" value="UniProtKB-EC"/>
</dbReference>
<dbReference type="GO" id="GO:0044210">
    <property type="term" value="P:'de novo' CTP biosynthetic process"/>
    <property type="evidence" value="ECO:0007669"/>
    <property type="project" value="UniProtKB-UniRule"/>
</dbReference>
<dbReference type="GO" id="GO:0006225">
    <property type="term" value="P:UDP biosynthetic process"/>
    <property type="evidence" value="ECO:0007669"/>
    <property type="project" value="TreeGrafter"/>
</dbReference>
<dbReference type="CDD" id="cd04254">
    <property type="entry name" value="AAK_UMPK-PyrH-Ec"/>
    <property type="match status" value="1"/>
</dbReference>
<dbReference type="FunFam" id="3.40.1160.10:FF:000001">
    <property type="entry name" value="Uridylate kinase"/>
    <property type="match status" value="1"/>
</dbReference>
<dbReference type="Gene3D" id="3.40.1160.10">
    <property type="entry name" value="Acetylglutamate kinase-like"/>
    <property type="match status" value="1"/>
</dbReference>
<dbReference type="HAMAP" id="MF_01220_B">
    <property type="entry name" value="PyrH_B"/>
    <property type="match status" value="1"/>
</dbReference>
<dbReference type="InterPro" id="IPR036393">
    <property type="entry name" value="AceGlu_kinase-like_sf"/>
</dbReference>
<dbReference type="InterPro" id="IPR001048">
    <property type="entry name" value="Asp/Glu/Uridylate_kinase"/>
</dbReference>
<dbReference type="InterPro" id="IPR011817">
    <property type="entry name" value="Uridylate_kinase"/>
</dbReference>
<dbReference type="InterPro" id="IPR015963">
    <property type="entry name" value="Uridylate_kinase_bac"/>
</dbReference>
<dbReference type="NCBIfam" id="TIGR02075">
    <property type="entry name" value="pyrH_bact"/>
    <property type="match status" value="1"/>
</dbReference>
<dbReference type="PANTHER" id="PTHR42833">
    <property type="entry name" value="URIDYLATE KINASE"/>
    <property type="match status" value="1"/>
</dbReference>
<dbReference type="PANTHER" id="PTHR42833:SF4">
    <property type="entry name" value="URIDYLATE KINASE PUMPKIN, CHLOROPLASTIC"/>
    <property type="match status" value="1"/>
</dbReference>
<dbReference type="Pfam" id="PF00696">
    <property type="entry name" value="AA_kinase"/>
    <property type="match status" value="1"/>
</dbReference>
<dbReference type="PIRSF" id="PIRSF005650">
    <property type="entry name" value="Uridylate_kin"/>
    <property type="match status" value="1"/>
</dbReference>
<dbReference type="SUPFAM" id="SSF53633">
    <property type="entry name" value="Carbamate kinase-like"/>
    <property type="match status" value="1"/>
</dbReference>
<gene>
    <name evidence="1" type="primary">pyrH</name>
    <name type="synonym">smbA</name>
    <name type="ordered locus">PMM0522</name>
</gene>
<protein>
    <recommendedName>
        <fullName evidence="1">Uridylate kinase</fullName>
        <shortName evidence="1">UK</shortName>
        <ecNumber evidence="1">2.7.4.22</ecNumber>
    </recommendedName>
    <alternativeName>
        <fullName evidence="1">Uridine monophosphate kinase</fullName>
        <shortName evidence="1">UMP kinase</shortName>
        <shortName evidence="1">UMPK</shortName>
    </alternativeName>
</protein>
<organism>
    <name type="scientific">Prochlorococcus marinus subsp. pastoris (strain CCMP1986 / NIES-2087 / MED4)</name>
    <dbReference type="NCBI Taxonomy" id="59919"/>
    <lineage>
        <taxon>Bacteria</taxon>
        <taxon>Bacillati</taxon>
        <taxon>Cyanobacteriota</taxon>
        <taxon>Cyanophyceae</taxon>
        <taxon>Synechococcales</taxon>
        <taxon>Prochlorococcaceae</taxon>
        <taxon>Prochlorococcus</taxon>
    </lineage>
</organism>
<accession>Q7V2F8</accession>
<sequence length="234" mass="25356">MTYKRVLLKLSGEALMGDKPYGIDPAIVQSIAEDVERVIANKVQLAIVVGGGNIFRGLKGSADGMDRATADYVGMLATVMNAISLQDGLERVGVETRVQTAIEMQEIAEPYIRRRAMRHLEKGRVVVFGGGCGNPFFTTDTTAALRAAEINAEVVMKATKVDGVYDRDPNKFKEAKKYSSLTYQQVLSDEIAVMDSTAIALCKDNNIPIMVFDIFKKGNISRAVAGESIGSLIS</sequence>
<keyword id="KW-0067">ATP-binding</keyword>
<keyword id="KW-0963">Cytoplasm</keyword>
<keyword id="KW-0418">Kinase</keyword>
<keyword id="KW-0547">Nucleotide-binding</keyword>
<keyword id="KW-0665">Pyrimidine biosynthesis</keyword>
<keyword id="KW-0808">Transferase</keyword>
<evidence type="ECO:0000255" key="1">
    <source>
        <dbReference type="HAMAP-Rule" id="MF_01220"/>
    </source>
</evidence>